<accession>Q6D9W6</accession>
<organism>
    <name type="scientific">Pectobacterium atrosepticum (strain SCRI 1043 / ATCC BAA-672)</name>
    <name type="common">Erwinia carotovora subsp. atroseptica</name>
    <dbReference type="NCBI Taxonomy" id="218491"/>
    <lineage>
        <taxon>Bacteria</taxon>
        <taxon>Pseudomonadati</taxon>
        <taxon>Pseudomonadota</taxon>
        <taxon>Gammaproteobacteria</taxon>
        <taxon>Enterobacterales</taxon>
        <taxon>Pectobacteriaceae</taxon>
        <taxon>Pectobacterium</taxon>
    </lineage>
</organism>
<feature type="chain" id="PRO_0000412783" description="Ribose 1,5-bisphosphate phosphokinase PhnN">
    <location>
        <begin position="1"/>
        <end position="188"/>
    </location>
</feature>
<feature type="binding site" evidence="1">
    <location>
        <begin position="9"/>
        <end position="16"/>
    </location>
    <ligand>
        <name>ATP</name>
        <dbReference type="ChEBI" id="CHEBI:30616"/>
    </ligand>
</feature>
<protein>
    <recommendedName>
        <fullName evidence="1">Ribose 1,5-bisphosphate phosphokinase PhnN</fullName>
        <ecNumber evidence="1">2.7.4.23</ecNumber>
    </recommendedName>
    <alternativeName>
        <fullName evidence="1">Ribose 1,5-bisphosphokinase</fullName>
    </alternativeName>
</protein>
<sequence>MTKLIYLIGPSGAGKDSLLRAIRQLPLPRLLVAHRYITRPAEIQGENHIALTPEEFAIRQQLGIFALDWQAHQCHYGIGIEIDYWLQRGSYVIVNGSRAYLTQARERYGNTLFPICLTVSESALRQRLRARGRESEQQIATRLQRAEDEQSRLQSDCILLNNDGDLQRTLSTFQSLLPFDRACAAHRE</sequence>
<proteinExistence type="inferred from homology"/>
<dbReference type="EC" id="2.7.4.23" evidence="1"/>
<dbReference type="EMBL" id="BX950851">
    <property type="protein sequence ID" value="CAG73412.1"/>
    <property type="molecule type" value="Genomic_DNA"/>
</dbReference>
<dbReference type="RefSeq" id="WP_011092117.1">
    <property type="nucleotide sequence ID" value="NC_004547.2"/>
</dbReference>
<dbReference type="SMR" id="Q6D9W6"/>
<dbReference type="STRING" id="218491.ECA0497"/>
<dbReference type="KEGG" id="eca:ECA0497"/>
<dbReference type="PATRIC" id="fig|218491.5.peg.502"/>
<dbReference type="eggNOG" id="COG3709">
    <property type="taxonomic scope" value="Bacteria"/>
</dbReference>
<dbReference type="HOGENOM" id="CLU_102477_0_0_6"/>
<dbReference type="OrthoDB" id="341217at2"/>
<dbReference type="UniPathway" id="UPA00087">
    <property type="reaction ID" value="UER00175"/>
</dbReference>
<dbReference type="Proteomes" id="UP000007966">
    <property type="component" value="Chromosome"/>
</dbReference>
<dbReference type="GO" id="GO:0005829">
    <property type="term" value="C:cytosol"/>
    <property type="evidence" value="ECO:0007669"/>
    <property type="project" value="TreeGrafter"/>
</dbReference>
<dbReference type="GO" id="GO:0005524">
    <property type="term" value="F:ATP binding"/>
    <property type="evidence" value="ECO:0007669"/>
    <property type="project" value="UniProtKB-KW"/>
</dbReference>
<dbReference type="GO" id="GO:0033863">
    <property type="term" value="F:ribose 1,5-bisphosphate phosphokinase activity"/>
    <property type="evidence" value="ECO:0007669"/>
    <property type="project" value="UniProtKB-UniRule"/>
</dbReference>
<dbReference type="GO" id="GO:0006015">
    <property type="term" value="P:5-phosphoribose 1-diphosphate biosynthetic process"/>
    <property type="evidence" value="ECO:0007669"/>
    <property type="project" value="UniProtKB-UniRule"/>
</dbReference>
<dbReference type="GO" id="GO:0019634">
    <property type="term" value="P:organic phosphonate metabolic process"/>
    <property type="evidence" value="ECO:0007669"/>
    <property type="project" value="UniProtKB-UniRule"/>
</dbReference>
<dbReference type="Gene3D" id="3.40.50.300">
    <property type="entry name" value="P-loop containing nucleotide triphosphate hydrolases"/>
    <property type="match status" value="1"/>
</dbReference>
<dbReference type="HAMAP" id="MF_00836">
    <property type="entry name" value="PhnN"/>
    <property type="match status" value="1"/>
</dbReference>
<dbReference type="InterPro" id="IPR008145">
    <property type="entry name" value="GK/Ca_channel_bsu"/>
</dbReference>
<dbReference type="InterPro" id="IPR008144">
    <property type="entry name" value="Guanylate_kin-like_dom"/>
</dbReference>
<dbReference type="InterPro" id="IPR027417">
    <property type="entry name" value="P-loop_NTPase"/>
</dbReference>
<dbReference type="InterPro" id="IPR012699">
    <property type="entry name" value="PhnN"/>
</dbReference>
<dbReference type="NCBIfam" id="TIGR02322">
    <property type="entry name" value="phosphon_PhnN"/>
    <property type="match status" value="1"/>
</dbReference>
<dbReference type="NCBIfam" id="NF007485">
    <property type="entry name" value="PRK10078.1"/>
    <property type="match status" value="1"/>
</dbReference>
<dbReference type="PANTHER" id="PTHR23117">
    <property type="entry name" value="GUANYLATE KINASE-RELATED"/>
    <property type="match status" value="1"/>
</dbReference>
<dbReference type="PANTHER" id="PTHR23117:SF8">
    <property type="entry name" value="RIBOSE 1,5-BISPHOSPHATE PHOSPHOKINASE PHNN"/>
    <property type="match status" value="1"/>
</dbReference>
<dbReference type="Pfam" id="PF00625">
    <property type="entry name" value="Guanylate_kin"/>
    <property type="match status" value="1"/>
</dbReference>
<dbReference type="SMART" id="SM00072">
    <property type="entry name" value="GuKc"/>
    <property type="match status" value="1"/>
</dbReference>
<dbReference type="SUPFAM" id="SSF52540">
    <property type="entry name" value="P-loop containing nucleoside triphosphate hydrolases"/>
    <property type="match status" value="1"/>
</dbReference>
<dbReference type="PROSITE" id="PS50052">
    <property type="entry name" value="GUANYLATE_KINASE_2"/>
    <property type="match status" value="1"/>
</dbReference>
<name>PHNN_PECAS</name>
<comment type="function">
    <text evidence="1">Catalyzes the phosphorylation of ribose 1,5-bisphosphate to 5-phospho-D-ribosyl alpha-1-diphosphate (PRPP).</text>
</comment>
<comment type="catalytic activity">
    <reaction evidence="1">
        <text>alpha-D-ribose 1,5-bisphosphate + ATP = 5-phospho-alpha-D-ribose 1-diphosphate + ADP</text>
        <dbReference type="Rhea" id="RHEA:20109"/>
        <dbReference type="ChEBI" id="CHEBI:30616"/>
        <dbReference type="ChEBI" id="CHEBI:58017"/>
        <dbReference type="ChEBI" id="CHEBI:68688"/>
        <dbReference type="ChEBI" id="CHEBI:456216"/>
        <dbReference type="EC" id="2.7.4.23"/>
    </reaction>
</comment>
<comment type="pathway">
    <text evidence="1">Metabolic intermediate biosynthesis; 5-phospho-alpha-D-ribose 1-diphosphate biosynthesis; 5-phospho-alpha-D-ribose 1-diphosphate from D-ribose 5-phosphate (route II): step 3/3.</text>
</comment>
<comment type="similarity">
    <text evidence="1">Belongs to the ribose 1,5-bisphosphokinase family.</text>
</comment>
<keyword id="KW-0067">ATP-binding</keyword>
<keyword id="KW-0547">Nucleotide-binding</keyword>
<keyword id="KW-1185">Reference proteome</keyword>
<keyword id="KW-0808">Transferase</keyword>
<evidence type="ECO:0000255" key="1">
    <source>
        <dbReference type="HAMAP-Rule" id="MF_00836"/>
    </source>
</evidence>
<gene>
    <name evidence="1" type="primary">phnN</name>
    <name type="ordered locus">ECA0497</name>
</gene>
<reference key="1">
    <citation type="journal article" date="2004" name="Proc. Natl. Acad. Sci. U.S.A.">
        <title>Genome sequence of the enterobacterial phytopathogen Erwinia carotovora subsp. atroseptica and characterization of virulence factors.</title>
        <authorList>
            <person name="Bell K.S."/>
            <person name="Sebaihia M."/>
            <person name="Pritchard L."/>
            <person name="Holden M.T.G."/>
            <person name="Hyman L.J."/>
            <person name="Holeva M.C."/>
            <person name="Thomson N.R."/>
            <person name="Bentley S.D."/>
            <person name="Churcher L.J.C."/>
            <person name="Mungall K."/>
            <person name="Atkin R."/>
            <person name="Bason N."/>
            <person name="Brooks K."/>
            <person name="Chillingworth T."/>
            <person name="Clark K."/>
            <person name="Doggett J."/>
            <person name="Fraser A."/>
            <person name="Hance Z."/>
            <person name="Hauser H."/>
            <person name="Jagels K."/>
            <person name="Moule S."/>
            <person name="Norbertczak H."/>
            <person name="Ormond D."/>
            <person name="Price C."/>
            <person name="Quail M.A."/>
            <person name="Sanders M."/>
            <person name="Walker D."/>
            <person name="Whitehead S."/>
            <person name="Salmond G.P.C."/>
            <person name="Birch P.R.J."/>
            <person name="Parkhill J."/>
            <person name="Toth I.K."/>
        </authorList>
    </citation>
    <scope>NUCLEOTIDE SEQUENCE [LARGE SCALE GENOMIC DNA]</scope>
    <source>
        <strain>SCRI 1043 / ATCC BAA-672</strain>
    </source>
</reference>